<gene>
    <name type="primary">HOXA6</name>
    <name type="synonym">HOX1B</name>
</gene>
<dbReference type="EMBL" id="AC004080">
    <property type="status" value="NOT_ANNOTATED_CDS"/>
    <property type="molecule type" value="Genomic_DNA"/>
</dbReference>
<dbReference type="EMBL" id="CH236948">
    <property type="protein sequence ID" value="EAL24222.1"/>
    <property type="molecule type" value="Genomic_DNA"/>
</dbReference>
<dbReference type="EMBL" id="CH471073">
    <property type="protein sequence ID" value="EAW93875.1"/>
    <property type="molecule type" value="Genomic_DNA"/>
</dbReference>
<dbReference type="EMBL" id="BC069497">
    <property type="protein sequence ID" value="AAH69497.1"/>
    <property type="molecule type" value="mRNA"/>
</dbReference>
<dbReference type="EMBL" id="BC104915">
    <property type="protein sequence ID" value="AAI04916.1"/>
    <property type="molecule type" value="mRNA"/>
</dbReference>
<dbReference type="EMBL" id="BC104917">
    <property type="protein sequence ID" value="AAI04918.1"/>
    <property type="molecule type" value="mRNA"/>
</dbReference>
<dbReference type="CCDS" id="CCDS5407.1"/>
<dbReference type="PIR" id="S15538">
    <property type="entry name" value="S15538"/>
</dbReference>
<dbReference type="RefSeq" id="NP_076919.1">
    <property type="nucleotide sequence ID" value="NM_024014.4"/>
</dbReference>
<dbReference type="SMR" id="P31267"/>
<dbReference type="BioGRID" id="109443">
    <property type="interactions" value="1"/>
</dbReference>
<dbReference type="FunCoup" id="P31267">
    <property type="interactions" value="1641"/>
</dbReference>
<dbReference type="IntAct" id="P31267">
    <property type="interactions" value="1"/>
</dbReference>
<dbReference type="STRING" id="9606.ENSP00000222728"/>
<dbReference type="iPTMnet" id="P31267"/>
<dbReference type="PhosphoSitePlus" id="P31267"/>
<dbReference type="BioMuta" id="HOXA6"/>
<dbReference type="DMDM" id="17378385"/>
<dbReference type="jPOST" id="P31267"/>
<dbReference type="MassIVE" id="P31267"/>
<dbReference type="PaxDb" id="9606-ENSP00000222728"/>
<dbReference type="PeptideAtlas" id="P31267"/>
<dbReference type="Antibodypedia" id="1430">
    <property type="antibodies" value="245 antibodies from 29 providers"/>
</dbReference>
<dbReference type="DNASU" id="3203"/>
<dbReference type="Ensembl" id="ENST00000222728.3">
    <property type="protein sequence ID" value="ENSP00000222728.3"/>
    <property type="gene ID" value="ENSG00000106006.6"/>
</dbReference>
<dbReference type="GeneID" id="3203"/>
<dbReference type="KEGG" id="hsa:3203"/>
<dbReference type="MANE-Select" id="ENST00000222728.3">
    <property type="protein sequence ID" value="ENSP00000222728.3"/>
    <property type="RefSeq nucleotide sequence ID" value="NM_024014.4"/>
    <property type="RefSeq protein sequence ID" value="NP_076919.1"/>
</dbReference>
<dbReference type="UCSC" id="uc003syo.3">
    <property type="organism name" value="human"/>
</dbReference>
<dbReference type="AGR" id="HGNC:5107"/>
<dbReference type="CTD" id="3203"/>
<dbReference type="DisGeNET" id="3203"/>
<dbReference type="GeneCards" id="HOXA6"/>
<dbReference type="HGNC" id="HGNC:5107">
    <property type="gene designation" value="HOXA6"/>
</dbReference>
<dbReference type="HPA" id="ENSG00000106006">
    <property type="expression patterns" value="Tissue enhanced (fallopian)"/>
</dbReference>
<dbReference type="MIM" id="142951">
    <property type="type" value="gene"/>
</dbReference>
<dbReference type="neXtProt" id="NX_P31267"/>
<dbReference type="OpenTargets" id="ENSG00000106006"/>
<dbReference type="PharmGKB" id="PA29384"/>
<dbReference type="VEuPathDB" id="HostDB:ENSG00000106006"/>
<dbReference type="eggNOG" id="KOG0489">
    <property type="taxonomic scope" value="Eukaryota"/>
</dbReference>
<dbReference type="GeneTree" id="ENSGT00940000161585"/>
<dbReference type="HOGENOM" id="CLU_061398_1_1_1"/>
<dbReference type="InParanoid" id="P31267"/>
<dbReference type="OMA" id="YSSPCFY"/>
<dbReference type="OrthoDB" id="6159439at2759"/>
<dbReference type="PAN-GO" id="P31267">
    <property type="GO annotations" value="5 GO annotations based on evolutionary models"/>
</dbReference>
<dbReference type="PhylomeDB" id="P31267"/>
<dbReference type="TreeFam" id="TF316310"/>
<dbReference type="PathwayCommons" id="P31267"/>
<dbReference type="Reactome" id="R-HSA-9830364">
    <property type="pathway name" value="Formation of the nephric duct"/>
</dbReference>
<dbReference type="BioGRID-ORCS" id="3203">
    <property type="hits" value="12 hits in 1168 CRISPR screens"/>
</dbReference>
<dbReference type="GeneWiki" id="HOXA6"/>
<dbReference type="GenomeRNAi" id="3203"/>
<dbReference type="Pharos" id="P31267">
    <property type="development level" value="Tbio"/>
</dbReference>
<dbReference type="PRO" id="PR:P31267"/>
<dbReference type="Proteomes" id="UP000005640">
    <property type="component" value="Chromosome 7"/>
</dbReference>
<dbReference type="RNAct" id="P31267">
    <property type="molecule type" value="protein"/>
</dbReference>
<dbReference type="Bgee" id="ENSG00000106006">
    <property type="expression patterns" value="Expressed in left uterine tube and 73 other cell types or tissues"/>
</dbReference>
<dbReference type="GO" id="GO:0000785">
    <property type="term" value="C:chromatin"/>
    <property type="evidence" value="ECO:0000247"/>
    <property type="project" value="NTNU_SB"/>
</dbReference>
<dbReference type="GO" id="GO:0016607">
    <property type="term" value="C:nuclear speck"/>
    <property type="evidence" value="ECO:0000314"/>
    <property type="project" value="HPA"/>
</dbReference>
<dbReference type="GO" id="GO:0005654">
    <property type="term" value="C:nucleoplasm"/>
    <property type="evidence" value="ECO:0000314"/>
    <property type="project" value="HPA"/>
</dbReference>
<dbReference type="GO" id="GO:0005634">
    <property type="term" value="C:nucleus"/>
    <property type="evidence" value="ECO:0000318"/>
    <property type="project" value="GO_Central"/>
</dbReference>
<dbReference type="GO" id="GO:0000981">
    <property type="term" value="F:DNA-binding transcription factor activity, RNA polymerase II-specific"/>
    <property type="evidence" value="ECO:0000247"/>
    <property type="project" value="NTNU_SB"/>
</dbReference>
<dbReference type="GO" id="GO:0000978">
    <property type="term" value="F:RNA polymerase II cis-regulatory region sequence-specific DNA binding"/>
    <property type="evidence" value="ECO:0000318"/>
    <property type="project" value="GO_Central"/>
</dbReference>
<dbReference type="GO" id="GO:1990837">
    <property type="term" value="F:sequence-specific double-stranded DNA binding"/>
    <property type="evidence" value="ECO:0000314"/>
    <property type="project" value="ARUK-UCL"/>
</dbReference>
<dbReference type="GO" id="GO:0009952">
    <property type="term" value="P:anterior/posterior pattern specification"/>
    <property type="evidence" value="ECO:0000318"/>
    <property type="project" value="GO_Central"/>
</dbReference>
<dbReference type="GO" id="GO:0048706">
    <property type="term" value="P:embryonic skeletal system development"/>
    <property type="evidence" value="ECO:0007669"/>
    <property type="project" value="Ensembl"/>
</dbReference>
<dbReference type="GO" id="GO:0006357">
    <property type="term" value="P:regulation of transcription by RNA polymerase II"/>
    <property type="evidence" value="ECO:0000318"/>
    <property type="project" value="GO_Central"/>
</dbReference>
<dbReference type="CDD" id="cd00086">
    <property type="entry name" value="homeodomain"/>
    <property type="match status" value="1"/>
</dbReference>
<dbReference type="FunFam" id="1.10.10.60:FF:000879">
    <property type="match status" value="1"/>
</dbReference>
<dbReference type="Gene3D" id="1.10.10.60">
    <property type="entry name" value="Homeodomain-like"/>
    <property type="match status" value="1"/>
</dbReference>
<dbReference type="InterPro" id="IPR050296">
    <property type="entry name" value="Antp_homeobox"/>
</dbReference>
<dbReference type="InterPro" id="IPR001356">
    <property type="entry name" value="HD"/>
</dbReference>
<dbReference type="InterPro" id="IPR020479">
    <property type="entry name" value="HD_metazoa"/>
</dbReference>
<dbReference type="InterPro" id="IPR017995">
    <property type="entry name" value="Homeobox_antennapedia"/>
</dbReference>
<dbReference type="InterPro" id="IPR001827">
    <property type="entry name" value="Homeobox_Antennapedia_CS"/>
</dbReference>
<dbReference type="InterPro" id="IPR017970">
    <property type="entry name" value="Homeobox_CS"/>
</dbReference>
<dbReference type="InterPro" id="IPR009057">
    <property type="entry name" value="Homeodomain-like_sf"/>
</dbReference>
<dbReference type="PANTHER" id="PTHR45659">
    <property type="entry name" value="HOMEOBOX PROTEIN HOX"/>
    <property type="match status" value="1"/>
</dbReference>
<dbReference type="PANTHER" id="PTHR45659:SF14">
    <property type="entry name" value="HOMEOBOX PROTEIN HOX-A6"/>
    <property type="match status" value="1"/>
</dbReference>
<dbReference type="Pfam" id="PF00046">
    <property type="entry name" value="Homeodomain"/>
    <property type="match status" value="1"/>
</dbReference>
<dbReference type="PRINTS" id="PR00025">
    <property type="entry name" value="ANTENNAPEDIA"/>
</dbReference>
<dbReference type="PRINTS" id="PR00024">
    <property type="entry name" value="HOMEOBOX"/>
</dbReference>
<dbReference type="SMART" id="SM00389">
    <property type="entry name" value="HOX"/>
    <property type="match status" value="1"/>
</dbReference>
<dbReference type="SUPFAM" id="SSF46689">
    <property type="entry name" value="Homeodomain-like"/>
    <property type="match status" value="1"/>
</dbReference>
<dbReference type="PROSITE" id="PS00032">
    <property type="entry name" value="ANTENNAPEDIA"/>
    <property type="match status" value="1"/>
</dbReference>
<dbReference type="PROSITE" id="PS00027">
    <property type="entry name" value="HOMEOBOX_1"/>
    <property type="match status" value="1"/>
</dbReference>
<dbReference type="PROSITE" id="PS50071">
    <property type="entry name" value="HOMEOBOX_2"/>
    <property type="match status" value="1"/>
</dbReference>
<accession>P31267</accession>
<accession>A4D192</accession>
<accession>Q2M3G3</accession>
<accession>Q9UPM0</accession>
<proteinExistence type="evidence at protein level"/>
<feature type="chain" id="PRO_0000200067" description="Homeobox protein Hox-A6">
    <location>
        <begin position="1"/>
        <end position="233"/>
    </location>
</feature>
<feature type="DNA-binding region" description="Homeobox" evidence="1">
    <location>
        <begin position="155"/>
        <end position="214"/>
    </location>
</feature>
<feature type="region of interest" description="Disordered" evidence="2">
    <location>
        <begin position="89"/>
        <end position="127"/>
    </location>
</feature>
<feature type="region of interest" description="Disordered" evidence="2">
    <location>
        <begin position="214"/>
        <end position="233"/>
    </location>
</feature>
<feature type="short sequence motif" description="Antp-type hexapeptide">
    <location>
        <begin position="136"/>
        <end position="141"/>
    </location>
</feature>
<feature type="compositionally biased region" description="Polar residues" evidence="2">
    <location>
        <begin position="107"/>
        <end position="119"/>
    </location>
</feature>
<comment type="function">
    <text>Sequence-specific transcription factor which is part of a developmental regulatory system that provides cells with specific positional identities on the anterior-posterior axis.</text>
</comment>
<comment type="subcellular location">
    <subcellularLocation>
        <location>Nucleus</location>
    </subcellularLocation>
</comment>
<comment type="similarity">
    <text evidence="3">Belongs to the Antp homeobox family.</text>
</comment>
<reference key="1">
    <citation type="journal article" date="2003" name="Science">
        <title>Human chromosome 7: DNA sequence and biology.</title>
        <authorList>
            <person name="Scherer S.W."/>
            <person name="Cheung J."/>
            <person name="MacDonald J.R."/>
            <person name="Osborne L.R."/>
            <person name="Nakabayashi K."/>
            <person name="Herbrick J.-A."/>
            <person name="Carson A.R."/>
            <person name="Parker-Katiraee L."/>
            <person name="Skaug J."/>
            <person name="Khaja R."/>
            <person name="Zhang J."/>
            <person name="Hudek A.K."/>
            <person name="Li M."/>
            <person name="Haddad M."/>
            <person name="Duggan G.E."/>
            <person name="Fernandez B.A."/>
            <person name="Kanematsu E."/>
            <person name="Gentles S."/>
            <person name="Christopoulos C.C."/>
            <person name="Choufani S."/>
            <person name="Kwasnicka D."/>
            <person name="Zheng X.H."/>
            <person name="Lai Z."/>
            <person name="Nusskern D.R."/>
            <person name="Zhang Q."/>
            <person name="Gu Z."/>
            <person name="Lu F."/>
            <person name="Zeesman S."/>
            <person name="Nowaczyk M.J."/>
            <person name="Teshima I."/>
            <person name="Chitayat D."/>
            <person name="Shuman C."/>
            <person name="Weksberg R."/>
            <person name="Zackai E.H."/>
            <person name="Grebe T.A."/>
            <person name="Cox S.R."/>
            <person name="Kirkpatrick S.J."/>
            <person name="Rahman N."/>
            <person name="Friedman J.M."/>
            <person name="Heng H.H.Q."/>
            <person name="Pelicci P.G."/>
            <person name="Lo-Coco F."/>
            <person name="Belloni E."/>
            <person name="Shaffer L.G."/>
            <person name="Pober B."/>
            <person name="Morton C.C."/>
            <person name="Gusella J.F."/>
            <person name="Bruns G.A.P."/>
            <person name="Korf B.R."/>
            <person name="Quade B.J."/>
            <person name="Ligon A.H."/>
            <person name="Ferguson H."/>
            <person name="Higgins A.W."/>
            <person name="Leach N.T."/>
            <person name="Herrick S.R."/>
            <person name="Lemyre E."/>
            <person name="Farra C.G."/>
            <person name="Kim H.-G."/>
            <person name="Summers A.M."/>
            <person name="Gripp K.W."/>
            <person name="Roberts W."/>
            <person name="Szatmari P."/>
            <person name="Winsor E.J.T."/>
            <person name="Grzeschik K.-H."/>
            <person name="Teebi A."/>
            <person name="Minassian B.A."/>
            <person name="Kere J."/>
            <person name="Armengol L."/>
            <person name="Pujana M.A."/>
            <person name="Estivill X."/>
            <person name="Wilson M.D."/>
            <person name="Koop B.F."/>
            <person name="Tosi S."/>
            <person name="Moore G.E."/>
            <person name="Boright A.P."/>
            <person name="Zlotorynski E."/>
            <person name="Kerem B."/>
            <person name="Kroisel P.M."/>
            <person name="Petek E."/>
            <person name="Oscier D.G."/>
            <person name="Mould S.J."/>
            <person name="Doehner H."/>
            <person name="Doehner K."/>
            <person name="Rommens J.M."/>
            <person name="Vincent J.B."/>
            <person name="Venter J.C."/>
            <person name="Li P.W."/>
            <person name="Mural R.J."/>
            <person name="Adams M.D."/>
            <person name="Tsui L.-C."/>
        </authorList>
    </citation>
    <scope>NUCLEOTIDE SEQUENCE [LARGE SCALE GENOMIC DNA]</scope>
</reference>
<reference key="2">
    <citation type="submission" date="2005-07" db="EMBL/GenBank/DDBJ databases">
        <authorList>
            <person name="Mural R.J."/>
            <person name="Istrail S."/>
            <person name="Sutton G.G."/>
            <person name="Florea L."/>
            <person name="Halpern A.L."/>
            <person name="Mobarry C.M."/>
            <person name="Lippert R."/>
            <person name="Walenz B."/>
            <person name="Shatkay H."/>
            <person name="Dew I."/>
            <person name="Miller J.R."/>
            <person name="Flanigan M.J."/>
            <person name="Edwards N.J."/>
            <person name="Bolanos R."/>
            <person name="Fasulo D."/>
            <person name="Halldorsson B.V."/>
            <person name="Hannenhalli S."/>
            <person name="Turner R."/>
            <person name="Yooseph S."/>
            <person name="Lu F."/>
            <person name="Nusskern D.R."/>
            <person name="Shue B.C."/>
            <person name="Zheng X.H."/>
            <person name="Zhong F."/>
            <person name="Delcher A.L."/>
            <person name="Huson D.H."/>
            <person name="Kravitz S.A."/>
            <person name="Mouchard L."/>
            <person name="Reinert K."/>
            <person name="Remington K.A."/>
            <person name="Clark A.G."/>
            <person name="Waterman M.S."/>
            <person name="Eichler E.E."/>
            <person name="Adams M.D."/>
            <person name="Hunkapiller M.W."/>
            <person name="Myers E.W."/>
            <person name="Venter J.C."/>
        </authorList>
    </citation>
    <scope>NUCLEOTIDE SEQUENCE [LARGE SCALE GENOMIC DNA]</scope>
</reference>
<reference key="3">
    <citation type="journal article" date="2003" name="Nature">
        <title>The DNA sequence of human chromosome 7.</title>
        <authorList>
            <person name="Hillier L.W."/>
            <person name="Fulton R.S."/>
            <person name="Fulton L.A."/>
            <person name="Graves T.A."/>
            <person name="Pepin K.H."/>
            <person name="Wagner-McPherson C."/>
            <person name="Layman D."/>
            <person name="Maas J."/>
            <person name="Jaeger S."/>
            <person name="Walker R."/>
            <person name="Wylie K."/>
            <person name="Sekhon M."/>
            <person name="Becker M.C."/>
            <person name="O'Laughlin M.D."/>
            <person name="Schaller M.E."/>
            <person name="Fewell G.A."/>
            <person name="Delehaunty K.D."/>
            <person name="Miner T.L."/>
            <person name="Nash W.E."/>
            <person name="Cordes M."/>
            <person name="Du H."/>
            <person name="Sun H."/>
            <person name="Edwards J."/>
            <person name="Bradshaw-Cordum H."/>
            <person name="Ali J."/>
            <person name="Andrews S."/>
            <person name="Isak A."/>
            <person name="Vanbrunt A."/>
            <person name="Nguyen C."/>
            <person name="Du F."/>
            <person name="Lamar B."/>
            <person name="Courtney L."/>
            <person name="Kalicki J."/>
            <person name="Ozersky P."/>
            <person name="Bielicki L."/>
            <person name="Scott K."/>
            <person name="Holmes A."/>
            <person name="Harkins R."/>
            <person name="Harris A."/>
            <person name="Strong C.M."/>
            <person name="Hou S."/>
            <person name="Tomlinson C."/>
            <person name="Dauphin-Kohlberg S."/>
            <person name="Kozlowicz-Reilly A."/>
            <person name="Leonard S."/>
            <person name="Rohlfing T."/>
            <person name="Rock S.M."/>
            <person name="Tin-Wollam A.-M."/>
            <person name="Abbott A."/>
            <person name="Minx P."/>
            <person name="Maupin R."/>
            <person name="Strowmatt C."/>
            <person name="Latreille P."/>
            <person name="Miller N."/>
            <person name="Johnson D."/>
            <person name="Murray J."/>
            <person name="Woessner J.P."/>
            <person name="Wendl M.C."/>
            <person name="Yang S.-P."/>
            <person name="Schultz B.R."/>
            <person name="Wallis J.W."/>
            <person name="Spieth J."/>
            <person name="Bieri T.A."/>
            <person name="Nelson J.O."/>
            <person name="Berkowicz N."/>
            <person name="Wohldmann P.E."/>
            <person name="Cook L.L."/>
            <person name="Hickenbotham M.T."/>
            <person name="Eldred J."/>
            <person name="Williams D."/>
            <person name="Bedell J.A."/>
            <person name="Mardis E.R."/>
            <person name="Clifton S.W."/>
            <person name="Chissoe S.L."/>
            <person name="Marra M.A."/>
            <person name="Raymond C."/>
            <person name="Haugen E."/>
            <person name="Gillett W."/>
            <person name="Zhou Y."/>
            <person name="James R."/>
            <person name="Phelps K."/>
            <person name="Iadanoto S."/>
            <person name="Bubb K."/>
            <person name="Simms E."/>
            <person name="Levy R."/>
            <person name="Clendenning J."/>
            <person name="Kaul R."/>
            <person name="Kent W.J."/>
            <person name="Furey T.S."/>
            <person name="Baertsch R.A."/>
            <person name="Brent M.R."/>
            <person name="Keibler E."/>
            <person name="Flicek P."/>
            <person name="Bork P."/>
            <person name="Suyama M."/>
            <person name="Bailey J.A."/>
            <person name="Portnoy M.E."/>
            <person name="Torrents D."/>
            <person name="Chinwalla A.T."/>
            <person name="Gish W.R."/>
            <person name="Eddy S.R."/>
            <person name="McPherson J.D."/>
            <person name="Olson M.V."/>
            <person name="Eichler E.E."/>
            <person name="Green E.D."/>
            <person name="Waterston R.H."/>
            <person name="Wilson R.K."/>
        </authorList>
    </citation>
    <scope>NUCLEOTIDE SEQUENCE [LARGE SCALE GENOMIC DNA]</scope>
</reference>
<reference key="4">
    <citation type="journal article" date="2004" name="Genome Res.">
        <title>The status, quality, and expansion of the NIH full-length cDNA project: the Mammalian Gene Collection (MGC).</title>
        <authorList>
            <consortium name="The MGC Project Team"/>
        </authorList>
    </citation>
    <scope>NUCLEOTIDE SEQUENCE [LARGE SCALE MRNA]</scope>
</reference>
<reference key="5">
    <citation type="journal article" date="1989" name="Genome">
        <title>Organization of human class I homeobox genes.</title>
        <authorList>
            <person name="Boncinelli E."/>
            <person name="Acampora D."/>
            <person name="Pannese M."/>
            <person name="D'Esposito M."/>
            <person name="Somma R."/>
            <person name="Gaudino G."/>
            <person name="Stornaiuolo A."/>
            <person name="Cafiero M."/>
            <person name="Faiella A."/>
            <person name="Simeone A."/>
        </authorList>
    </citation>
    <scope>NUCLEOTIDE SEQUENCE [GENOMIC DNA] OF 155-220</scope>
</reference>
<evidence type="ECO:0000255" key="1">
    <source>
        <dbReference type="PROSITE-ProRule" id="PRU00108"/>
    </source>
</evidence>
<evidence type="ECO:0000256" key="2">
    <source>
        <dbReference type="SAM" id="MobiDB-lite"/>
    </source>
</evidence>
<evidence type="ECO:0000305" key="3"/>
<name>HXA6_HUMAN</name>
<keyword id="KW-0217">Developmental protein</keyword>
<keyword id="KW-0238">DNA-binding</keyword>
<keyword id="KW-0371">Homeobox</keyword>
<keyword id="KW-0539">Nucleus</keyword>
<keyword id="KW-1267">Proteomics identification</keyword>
<keyword id="KW-1185">Reference proteome</keyword>
<keyword id="KW-0804">Transcription</keyword>
<keyword id="KW-0805">Transcription regulation</keyword>
<protein>
    <recommendedName>
        <fullName>Homeobox protein Hox-A6</fullName>
    </recommendedName>
    <alternativeName>
        <fullName>Homeobox protein Hox-1B</fullName>
    </alternativeName>
</protein>
<organism>
    <name type="scientific">Homo sapiens</name>
    <name type="common">Human</name>
    <dbReference type="NCBI Taxonomy" id="9606"/>
    <lineage>
        <taxon>Eukaryota</taxon>
        <taxon>Metazoa</taxon>
        <taxon>Chordata</taxon>
        <taxon>Craniata</taxon>
        <taxon>Vertebrata</taxon>
        <taxon>Euteleostomi</taxon>
        <taxon>Mammalia</taxon>
        <taxon>Eutheria</taxon>
        <taxon>Euarchontoglires</taxon>
        <taxon>Primates</taxon>
        <taxon>Haplorrhini</taxon>
        <taxon>Catarrhini</taxon>
        <taxon>Hominidae</taxon>
        <taxon>Homo</taxon>
    </lineage>
</organism>
<sequence>MSSYFVNPTFPGSLPSGQDSFLGQLPLYQAGYDALRPFPASYGASSLPDKTYTSPCFYQQSNSVLACNRASYEYGASCFYSDKDLSGASPSGSGKQRGPGDYLHFSPEQQYKPDSSSGQGKALHDEGADRKYTSPVYPWMQRMNSCAGAVYGSHGRRGRQTYTRYQTLELEKEFHFNRYLTRRRRIEIANALCLTERQIKIWFQNRRMKWKKENKLINSTQPSGEDSEAKAGE</sequence>